<feature type="chain" id="PRO_1000050624" description="Small ribosomal subunit protein eS17">
    <location>
        <begin position="1"/>
        <end position="63"/>
    </location>
</feature>
<sequence>MGRIRQTFIKRAGEDLVEKYEDRLTTDFETNKKVIDEVAEIATKRLRNRVAGYVTKKMKKVDA</sequence>
<protein>
    <recommendedName>
        <fullName evidence="1">Small ribosomal subunit protein eS17</fullName>
    </recommendedName>
    <alternativeName>
        <fullName evidence="2">30S ribosomal protein S17e</fullName>
    </alternativeName>
</protein>
<keyword id="KW-0687">Ribonucleoprotein</keyword>
<keyword id="KW-0689">Ribosomal protein</keyword>
<accession>A6UVG8</accession>
<evidence type="ECO:0000255" key="1">
    <source>
        <dbReference type="HAMAP-Rule" id="MF_00511"/>
    </source>
</evidence>
<evidence type="ECO:0000305" key="2"/>
<organism>
    <name type="scientific">Methanococcus aeolicus (strain ATCC BAA-1280 / DSM 17508 / OCM 812 / Nankai-3)</name>
    <dbReference type="NCBI Taxonomy" id="419665"/>
    <lineage>
        <taxon>Archaea</taxon>
        <taxon>Methanobacteriati</taxon>
        <taxon>Methanobacteriota</taxon>
        <taxon>Methanomada group</taxon>
        <taxon>Methanococci</taxon>
        <taxon>Methanococcales</taxon>
        <taxon>Methanococcaceae</taxon>
        <taxon>Methanococcus</taxon>
    </lineage>
</organism>
<comment type="similarity">
    <text evidence="1">Belongs to the eukaryotic ribosomal protein eS17 family.</text>
</comment>
<name>RS17E_META3</name>
<gene>
    <name evidence="1" type="primary">rps17e</name>
    <name type="ordered locus">Maeo_0909</name>
</gene>
<reference key="1">
    <citation type="submission" date="2007-06" db="EMBL/GenBank/DDBJ databases">
        <title>Complete sequence of Methanococcus aeolicus Nankai-3.</title>
        <authorList>
            <consortium name="US DOE Joint Genome Institute"/>
            <person name="Copeland A."/>
            <person name="Lucas S."/>
            <person name="Lapidus A."/>
            <person name="Barry K."/>
            <person name="Glavina del Rio T."/>
            <person name="Dalin E."/>
            <person name="Tice H."/>
            <person name="Pitluck S."/>
            <person name="Chain P."/>
            <person name="Malfatti S."/>
            <person name="Shin M."/>
            <person name="Vergez L."/>
            <person name="Schmutz J."/>
            <person name="Larimer F."/>
            <person name="Land M."/>
            <person name="Hauser L."/>
            <person name="Kyrpides N."/>
            <person name="Lykidis A."/>
            <person name="Sieprawska-Lupa M."/>
            <person name="Whitman W.B."/>
            <person name="Richardson P."/>
        </authorList>
    </citation>
    <scope>NUCLEOTIDE SEQUENCE [LARGE SCALE GENOMIC DNA]</scope>
    <source>
        <strain>ATCC BAA-1280 / DSM 17508 / OCM 812 / Nankai-3</strain>
    </source>
</reference>
<proteinExistence type="inferred from homology"/>
<dbReference type="EMBL" id="CP000743">
    <property type="protein sequence ID" value="ABR56490.1"/>
    <property type="molecule type" value="Genomic_DNA"/>
</dbReference>
<dbReference type="RefSeq" id="WP_011973622.1">
    <property type="nucleotide sequence ID" value="NC_009635.1"/>
</dbReference>
<dbReference type="SMR" id="A6UVG8"/>
<dbReference type="STRING" id="419665.Maeo_0909"/>
<dbReference type="GeneID" id="5327072"/>
<dbReference type="KEGG" id="mae:Maeo_0909"/>
<dbReference type="eggNOG" id="arCOG01885">
    <property type="taxonomic scope" value="Archaea"/>
</dbReference>
<dbReference type="HOGENOM" id="CLU_176720_0_1_2"/>
<dbReference type="OrthoDB" id="52479at2157"/>
<dbReference type="Proteomes" id="UP000001106">
    <property type="component" value="Chromosome"/>
</dbReference>
<dbReference type="GO" id="GO:0005829">
    <property type="term" value="C:cytosol"/>
    <property type="evidence" value="ECO:0007669"/>
    <property type="project" value="UniProtKB-ARBA"/>
</dbReference>
<dbReference type="GO" id="GO:1990904">
    <property type="term" value="C:ribonucleoprotein complex"/>
    <property type="evidence" value="ECO:0007669"/>
    <property type="project" value="UniProtKB-KW"/>
</dbReference>
<dbReference type="GO" id="GO:0005840">
    <property type="term" value="C:ribosome"/>
    <property type="evidence" value="ECO:0007669"/>
    <property type="project" value="UniProtKB-KW"/>
</dbReference>
<dbReference type="GO" id="GO:0003735">
    <property type="term" value="F:structural constituent of ribosome"/>
    <property type="evidence" value="ECO:0007669"/>
    <property type="project" value="InterPro"/>
</dbReference>
<dbReference type="GO" id="GO:0006412">
    <property type="term" value="P:translation"/>
    <property type="evidence" value="ECO:0007669"/>
    <property type="project" value="UniProtKB-UniRule"/>
</dbReference>
<dbReference type="Gene3D" id="1.10.60.20">
    <property type="entry name" value="Ribosomal protein S17e-like"/>
    <property type="match status" value="1"/>
</dbReference>
<dbReference type="HAMAP" id="MF_00511">
    <property type="entry name" value="Ribosomal_eS17"/>
    <property type="match status" value="1"/>
</dbReference>
<dbReference type="InterPro" id="IPR001210">
    <property type="entry name" value="Ribosomal_eS17"/>
</dbReference>
<dbReference type="InterPro" id="IPR018273">
    <property type="entry name" value="Ribosomal_eS17_CS"/>
</dbReference>
<dbReference type="InterPro" id="IPR036401">
    <property type="entry name" value="Ribosomal_eS17_sf"/>
</dbReference>
<dbReference type="NCBIfam" id="NF002242">
    <property type="entry name" value="PRK01151.1"/>
    <property type="match status" value="1"/>
</dbReference>
<dbReference type="PANTHER" id="PTHR10732">
    <property type="entry name" value="40S RIBOSOMAL PROTEIN S17"/>
    <property type="match status" value="1"/>
</dbReference>
<dbReference type="PANTHER" id="PTHR10732:SF0">
    <property type="entry name" value="40S RIBOSOMAL PROTEIN S17"/>
    <property type="match status" value="1"/>
</dbReference>
<dbReference type="Pfam" id="PF00833">
    <property type="entry name" value="Ribosomal_S17e"/>
    <property type="match status" value="1"/>
</dbReference>
<dbReference type="SUPFAM" id="SSF116820">
    <property type="entry name" value="Rps17e-like"/>
    <property type="match status" value="1"/>
</dbReference>
<dbReference type="PROSITE" id="PS00712">
    <property type="entry name" value="RIBOSOMAL_S17E"/>
    <property type="match status" value="1"/>
</dbReference>